<feature type="chain" id="PRO_0000247999" description="LysM and putative peptidoglycan-binding domain-containing protein 1">
    <location>
        <begin position="1"/>
        <end position="227"/>
    </location>
</feature>
<feature type="domain" description="LysM" evidence="3">
    <location>
        <begin position="40"/>
        <end position="84"/>
    </location>
</feature>
<feature type="region of interest" description="Disordered" evidence="4">
    <location>
        <begin position="95"/>
        <end position="157"/>
    </location>
</feature>
<feature type="region of interest" description="Disordered" evidence="4">
    <location>
        <begin position="169"/>
        <end position="227"/>
    </location>
</feature>
<feature type="compositionally biased region" description="Acidic residues" evidence="4">
    <location>
        <begin position="98"/>
        <end position="108"/>
    </location>
</feature>
<feature type="compositionally biased region" description="Polar residues" evidence="4">
    <location>
        <begin position="143"/>
        <end position="152"/>
    </location>
</feature>
<feature type="compositionally biased region" description="Basic and acidic residues" evidence="4">
    <location>
        <begin position="216"/>
        <end position="227"/>
    </location>
</feature>
<feature type="modified residue" description="Phosphoserine" evidence="1">
    <location>
        <position position="23"/>
    </location>
</feature>
<feature type="modified residue" description="Phosphoserine" evidence="1">
    <location>
        <position position="33"/>
    </location>
</feature>
<feature type="modified residue" description="Phosphoserine" evidence="6">
    <location>
        <position position="99"/>
    </location>
</feature>
<feature type="modified residue" description="Phosphoserine" evidence="1">
    <location>
        <position position="166"/>
    </location>
</feature>
<feature type="modified residue" description="Phosphoserine" evidence="5">
    <location>
        <position position="181"/>
    </location>
</feature>
<feature type="modified residue" description="Phosphoserine" evidence="2">
    <location>
        <position position="194"/>
    </location>
</feature>
<feature type="modified residue" description="Phosphoserine" evidence="1">
    <location>
        <position position="212"/>
    </location>
</feature>
<proteinExistence type="evidence at protein level"/>
<evidence type="ECO:0000250" key="1">
    <source>
        <dbReference type="UniProtKB" id="Q96S90"/>
    </source>
</evidence>
<evidence type="ECO:0000250" key="2">
    <source>
        <dbReference type="UniProtKB" id="Q9D0E3"/>
    </source>
</evidence>
<evidence type="ECO:0000255" key="3">
    <source>
        <dbReference type="PROSITE-ProRule" id="PRU01118"/>
    </source>
</evidence>
<evidence type="ECO:0000256" key="4">
    <source>
        <dbReference type="SAM" id="MobiDB-lite"/>
    </source>
</evidence>
<evidence type="ECO:0007744" key="5">
    <source>
    </source>
</evidence>
<evidence type="ECO:0007744" key="6">
    <source>
    </source>
</evidence>
<name>LYSM1_RAT</name>
<sequence>MASPSRQPPLGGSGLLRGSRARSYGSLVQSSCSPVRERRLEHQLEPGDTLAGLALKYGVTMEQIKRTNRLYTNDSIFLKKTLYIPILTEPRDLFNGLDSEEEENDGEEEVRPSKDEIGSSSGKRKNQGSASSQPKGTGLPPHQGTSTPSHDLSASDFLKKLDSQISLSKKAAAQKLRKGESGVPEEDTGLYPSSPRMQQRAVLGPVPLTRTSRTQTLRDQEDEIFKL</sequence>
<dbReference type="EMBL" id="BC089113">
    <property type="protein sequence ID" value="AAH89113.1"/>
    <property type="molecule type" value="mRNA"/>
</dbReference>
<dbReference type="EMBL" id="BC092612">
    <property type="protein sequence ID" value="AAH92612.1"/>
    <property type="molecule type" value="mRNA"/>
</dbReference>
<dbReference type="RefSeq" id="NP_001019473.1">
    <property type="nucleotide sequence ID" value="NM_001024302.2"/>
</dbReference>
<dbReference type="SMR" id="Q5HZA4"/>
<dbReference type="FunCoup" id="Q5HZA4">
    <property type="interactions" value="1539"/>
</dbReference>
<dbReference type="iPTMnet" id="Q5HZA4"/>
<dbReference type="PhosphoSitePlus" id="Q5HZA4"/>
<dbReference type="PaxDb" id="10116-ENSRNOP00000028640"/>
<dbReference type="Ensembl" id="ENSRNOT00000028640.7">
    <property type="protein sequence ID" value="ENSRNOP00000028640.3"/>
    <property type="gene ID" value="ENSRNOG00000021099.7"/>
</dbReference>
<dbReference type="GeneID" id="499671"/>
<dbReference type="KEGG" id="rno:499671"/>
<dbReference type="UCSC" id="RGD:1561865">
    <property type="organism name" value="rat"/>
</dbReference>
<dbReference type="AGR" id="RGD:1561865"/>
<dbReference type="CTD" id="388695"/>
<dbReference type="RGD" id="1561865">
    <property type="gene designation" value="Lysmd1"/>
</dbReference>
<dbReference type="eggNOG" id="ENOG502RZER">
    <property type="taxonomic scope" value="Eukaryota"/>
</dbReference>
<dbReference type="GeneTree" id="ENSGT00940000160002"/>
<dbReference type="HOGENOM" id="CLU_079453_0_0_1"/>
<dbReference type="InParanoid" id="Q5HZA4"/>
<dbReference type="OMA" id="EVWPHSA"/>
<dbReference type="OrthoDB" id="2107166at2759"/>
<dbReference type="PhylomeDB" id="Q5HZA4"/>
<dbReference type="TreeFam" id="TF318444"/>
<dbReference type="PRO" id="PR:Q5HZA4"/>
<dbReference type="Proteomes" id="UP000002494">
    <property type="component" value="Chromosome 2"/>
</dbReference>
<dbReference type="Bgee" id="ENSRNOG00000021099">
    <property type="expression patterns" value="Expressed in skeletal muscle tissue and 20 other cell types or tissues"/>
</dbReference>
<dbReference type="CDD" id="cd00118">
    <property type="entry name" value="LysM"/>
    <property type="match status" value="1"/>
</dbReference>
<dbReference type="FunFam" id="3.10.350.10:FF:000010">
    <property type="entry name" value="LysM and putative peptidoglycan-binding domain-containing protein 1"/>
    <property type="match status" value="1"/>
</dbReference>
<dbReference type="Gene3D" id="3.10.350.10">
    <property type="entry name" value="LysM domain"/>
    <property type="match status" value="1"/>
</dbReference>
<dbReference type="InterPro" id="IPR045030">
    <property type="entry name" value="LYSM1-4"/>
</dbReference>
<dbReference type="InterPro" id="IPR018392">
    <property type="entry name" value="LysM_dom"/>
</dbReference>
<dbReference type="InterPro" id="IPR036779">
    <property type="entry name" value="LysM_dom_sf"/>
</dbReference>
<dbReference type="PANTHER" id="PTHR20932:SF2">
    <property type="entry name" value="AND PUTATIVE PEPTIDOGLYCAN-BINDING DOMAIN-CONTAINING PROTEIN 1-RELATED"/>
    <property type="match status" value="1"/>
</dbReference>
<dbReference type="PANTHER" id="PTHR20932">
    <property type="entry name" value="LYSM AND PUTATIVE PEPTIDOGLYCAN-BINDING DOMAIN-CONTAINING PROTEIN"/>
    <property type="match status" value="1"/>
</dbReference>
<dbReference type="Pfam" id="PF01476">
    <property type="entry name" value="LysM"/>
    <property type="match status" value="1"/>
</dbReference>
<dbReference type="SMART" id="SM00257">
    <property type="entry name" value="LysM"/>
    <property type="match status" value="1"/>
</dbReference>
<dbReference type="SUPFAM" id="SSF54106">
    <property type="entry name" value="LysM domain"/>
    <property type="match status" value="1"/>
</dbReference>
<dbReference type="PROSITE" id="PS51782">
    <property type="entry name" value="LYSM"/>
    <property type="match status" value="1"/>
</dbReference>
<gene>
    <name type="primary">Lysmd1</name>
</gene>
<reference key="1">
    <citation type="journal article" date="2004" name="Genome Res.">
        <title>The status, quality, and expansion of the NIH full-length cDNA project: the Mammalian Gene Collection (MGC).</title>
        <authorList>
            <consortium name="The MGC Project Team"/>
        </authorList>
    </citation>
    <scope>NUCLEOTIDE SEQUENCE [LARGE SCALE MRNA]</scope>
    <source>
        <tissue>Brain</tissue>
        <tissue>Ovary</tissue>
    </source>
</reference>
<reference key="2">
    <citation type="journal article" date="2006" name="Proc. Natl. Acad. Sci. U.S.A.">
        <title>Quantitative phosphoproteomics of vasopressin-sensitive renal cells: regulation of aquaporin-2 phosphorylation at two sites.</title>
        <authorList>
            <person name="Hoffert J.D."/>
            <person name="Pisitkun T."/>
            <person name="Wang G."/>
            <person name="Shen R.-F."/>
            <person name="Knepper M.A."/>
        </authorList>
    </citation>
    <scope>PHOSPHORYLATION [LARGE SCALE ANALYSIS] AT SER-181</scope>
    <scope>IDENTIFICATION BY MASS SPECTROMETRY [LARGE SCALE ANALYSIS]</scope>
</reference>
<reference key="3">
    <citation type="journal article" date="2012" name="Nat. Commun.">
        <title>Quantitative maps of protein phosphorylation sites across 14 different rat organs and tissues.</title>
        <authorList>
            <person name="Lundby A."/>
            <person name="Secher A."/>
            <person name="Lage K."/>
            <person name="Nordsborg N.B."/>
            <person name="Dmytriyev A."/>
            <person name="Lundby C."/>
            <person name="Olsen J.V."/>
        </authorList>
    </citation>
    <scope>PHOSPHORYLATION [LARGE SCALE ANALYSIS] AT SER-99</scope>
    <scope>IDENTIFICATION BY MASS SPECTROMETRY [LARGE SCALE ANALYSIS]</scope>
</reference>
<organism>
    <name type="scientific">Rattus norvegicus</name>
    <name type="common">Rat</name>
    <dbReference type="NCBI Taxonomy" id="10116"/>
    <lineage>
        <taxon>Eukaryota</taxon>
        <taxon>Metazoa</taxon>
        <taxon>Chordata</taxon>
        <taxon>Craniata</taxon>
        <taxon>Vertebrata</taxon>
        <taxon>Euteleostomi</taxon>
        <taxon>Mammalia</taxon>
        <taxon>Eutheria</taxon>
        <taxon>Euarchontoglires</taxon>
        <taxon>Glires</taxon>
        <taxon>Rodentia</taxon>
        <taxon>Myomorpha</taxon>
        <taxon>Muroidea</taxon>
        <taxon>Muridae</taxon>
        <taxon>Murinae</taxon>
        <taxon>Rattus</taxon>
    </lineage>
</organism>
<protein>
    <recommendedName>
        <fullName>LysM and putative peptidoglycan-binding domain-containing protein 1</fullName>
    </recommendedName>
</protein>
<accession>Q5HZA4</accession>
<accession>Q562B1</accession>
<keyword id="KW-0597">Phosphoprotein</keyword>
<keyword id="KW-1185">Reference proteome</keyword>